<organism>
    <name type="scientific">Rhizophagus irregularis (strain DAOM 181602 / DAOM 197198 / MUCL 43194)</name>
    <name type="common">Arbuscular mycorrhizal fungus</name>
    <name type="synonym">Glomus intraradices</name>
    <dbReference type="NCBI Taxonomy" id="747089"/>
    <lineage>
        <taxon>Eukaryota</taxon>
        <taxon>Fungi</taxon>
        <taxon>Fungi incertae sedis</taxon>
        <taxon>Mucoromycota</taxon>
        <taxon>Glomeromycotina</taxon>
        <taxon>Glomeromycetes</taxon>
        <taxon>Glomerales</taxon>
        <taxon>Glomeraceae</taxon>
        <taxon>Rhizophagus</taxon>
    </lineage>
</organism>
<sequence length="469" mass="52673">MSITLLCLIKGNTLANAFPVDIDKDQLVGHLKKVIKAEQPQTFANVDAKDLKLWRVPISDDHDDQLRNLSLEDSDELLAIRKISKYFPDSPPEECIHVLVEPPESTATSEVLKLREEVASLQALLNKSVAFDVVVSPKRTKGFKWTVNIEQATLDGLKEHIRKMEKPPALENDGAVLNIVNESGKYSPLNDQDLREMLQLFVSNKNLKFTVFIETPSKAFSDWTFSSVCQLYGLNGETEDPTMTVFPNFSCGNVKPSQESLEGLMAELKSRLDNTPISLLSVEATKSLYVYSYLLAGANNFKGKFEIRPQKVISGPNGHGPLDFAIDLCQTAKTVGVTEVKKDDFVKGVAQCAVQLESSLSYRKRKADEMEERTFGRVFGIVTDAEKFYFMECSMDDQDRPSFKLSKPVTVVYEDNDLQTKVEKVLEHIVWLLEEAQKPDSALDVKEREIKRVRSGELPKVTDLEGKTN</sequence>
<protein>
    <recommendedName>
        <fullName evidence="4">Crinkler effector protein 1</fullName>
    </recommendedName>
</protein>
<comment type="function">
    <text evidence="3">Effector that participates in the arbuscule development step of the symbiosis. Arbuscular mycorrhizal (AM) symbiosis is one of the most prominent and beneficial plant-microbe interactions that facilitates mineral nutrition and confers tolerance to biotic and abiotic stresses (PubMed:30233541). Is not involved in cell death processes (PubMed:30233541).</text>
</comment>
<comment type="subunit">
    <text evidence="3">Homodimer.</text>
</comment>
<comment type="subcellular location">
    <subcellularLocation>
        <location evidence="3">Secreted</location>
    </subcellularLocation>
    <subcellularLocation>
        <location evidence="3">Host nucleus</location>
    </subcellularLocation>
    <text evidence="3">Localizes to host nuclear bodies.</text>
</comment>
<comment type="induction">
    <text evidence="3">Expressed during symbiosis establishment in parallel to host M.truncatula PT4, the gene coding for an arbuscule-specific phosphate transporter.</text>
</comment>
<comment type="domain">
    <text evidence="6">The CRN proteins have modular architectures that include a signal peptide, a conserved N-terminus, and highly diverse C-terminal domains. The conserved CRN N-terminus harbors a distinct LXLFLAK motif, which is followed by the conserved DWL domain. A highly conserved HVLVXXP motif marks the end of the CRN N-terminal domains and forms a junction where diverse C-terminal domains are fused.</text>
</comment>
<comment type="disruption phenotype">
    <text evidence="3">Leads to an impairment of the symbiosis in M.truncatula and to a reduction of host PT4.</text>
</comment>
<comment type="similarity">
    <text evidence="5">Belongs to the Crinkler effector family.</text>
</comment>
<comment type="sequence caution" evidence="5">
    <conflict type="erroneous gene model prediction">
        <sequence resource="EMBL-CDS" id="GBC18181"/>
    </conflict>
</comment>
<feature type="signal peptide" evidence="1">
    <location>
        <begin position="1"/>
        <end position="17"/>
    </location>
</feature>
<feature type="chain" id="PRO_5014184437" description="Crinkler effector protein 1">
    <location>
        <begin position="18"/>
        <end position="469"/>
    </location>
</feature>
<feature type="region of interest" description="LQLFLAK-like domain" evidence="6">
    <location>
        <begin position="18"/>
        <end position="57"/>
    </location>
</feature>
<feature type="region of interest" description="DWL domain" evidence="6">
    <location>
        <begin position="58"/>
        <end position="96"/>
    </location>
</feature>
<feature type="short sequence motif" description="HVLVXXP motif" evidence="6">
    <location>
        <begin position="97"/>
        <end position="103"/>
    </location>
</feature>
<feature type="glycosylation site" description="N-linked (GlcNAc...) asparagine" evidence="2">
    <location>
        <position position="68"/>
    </location>
</feature>
<feature type="glycosylation site" description="N-linked (GlcNAc...) asparagine" evidence="2">
    <location>
        <position position="126"/>
    </location>
</feature>
<feature type="glycosylation site" description="N-linked (GlcNAc...) asparagine" evidence="2">
    <location>
        <position position="181"/>
    </location>
</feature>
<feature type="glycosylation site" description="N-linked (GlcNAc...) asparagine" evidence="2">
    <location>
        <position position="248"/>
    </location>
</feature>
<evidence type="ECO:0000255" key="1"/>
<evidence type="ECO:0000255" key="2">
    <source>
        <dbReference type="PROSITE-ProRule" id="PRU00498"/>
    </source>
</evidence>
<evidence type="ECO:0000269" key="3">
    <source>
    </source>
</evidence>
<evidence type="ECO:0000303" key="4">
    <source>
    </source>
</evidence>
<evidence type="ECO:0000305" key="5"/>
<evidence type="ECO:0000305" key="6">
    <source>
    </source>
</evidence>
<reference key="1">
    <citation type="journal article" date="2018" name="Front. Microbiol.">
        <title>RiCRN1, a Crinkler effector from the arbuscular mycorrhizal fungus Rhizophagus irregularis, functions in arbuscule development.</title>
        <authorList>
            <person name="Voss S."/>
            <person name="Betz R."/>
            <person name="Heidt S."/>
            <person name="Corradi N."/>
            <person name="Requena N."/>
        </authorList>
    </citation>
    <scope>NUCLEOTIDE SEQUENCE [MRNA]</scope>
    <scope>DOMAIN</scope>
    <scope>INDUCTION</scope>
    <scope>SUBCELLULAR LOCATION</scope>
    <scope>SUBUNIT</scope>
    <scope>DISRUPTION PHENOTYPE</scope>
    <source>
        <strain>DAOM 181602 / DAOM 197198 / MUCL 43194</strain>
    </source>
</reference>
<reference key="2">
    <citation type="journal article" date="2018" name="Commun. Biol.">
        <title>Evidence of non-tandemly repeated rDNAs and their intragenomic heterogeneity in Rhizophagus irregularis.</title>
        <authorList>
            <person name="Maeda T."/>
            <person name="Kobayashi Y."/>
            <person name="Kameoka H."/>
            <person name="Okuma N."/>
            <person name="Takeda N."/>
            <person name="Yamaguchi K."/>
            <person name="Bino T."/>
            <person name="Shigenobu S."/>
            <person name="Kawaguchi M."/>
        </authorList>
    </citation>
    <scope>NUCLEOTIDE SEQUENCE [LARGE SCALE GENOMIC DNA]</scope>
    <source>
        <strain>DAOM 181602 / DAOM 197198 / MUCL 43194</strain>
    </source>
</reference>
<dbReference type="EMBL" id="MH542411">
    <property type="protein sequence ID" value="AYD49683.1"/>
    <property type="molecule type" value="mRNA"/>
</dbReference>
<dbReference type="EMBL" id="BDIQ01000048">
    <property type="protein sequence ID" value="GBC18181.1"/>
    <property type="status" value="ALT_SEQ"/>
    <property type="molecule type" value="Genomic_DNA"/>
</dbReference>
<dbReference type="STRING" id="747089.A0A2H5RJD4"/>
<dbReference type="GlyCosmos" id="A0A2H5RJD4">
    <property type="glycosylation" value="4 sites, No reported glycans"/>
</dbReference>
<dbReference type="VEuPathDB" id="FungiDB:RhiirFUN_021443"/>
<dbReference type="GO" id="GO:0005576">
    <property type="term" value="C:extracellular region"/>
    <property type="evidence" value="ECO:0007669"/>
    <property type="project" value="UniProtKB-SubCell"/>
</dbReference>
<dbReference type="GO" id="GO:0042025">
    <property type="term" value="C:host cell nucleus"/>
    <property type="evidence" value="ECO:0007669"/>
    <property type="project" value="UniProtKB-SubCell"/>
</dbReference>
<dbReference type="InterPro" id="IPR045379">
    <property type="entry name" value="Crinkler_N"/>
</dbReference>
<dbReference type="Pfam" id="PF20147">
    <property type="entry name" value="Crinkler"/>
    <property type="match status" value="1"/>
</dbReference>
<proteinExistence type="evidence at protein level"/>
<gene>
    <name evidence="4" type="primary">CRN1</name>
    <name type="ORF">RIR_0600100</name>
</gene>
<keyword id="KW-0325">Glycoprotein</keyword>
<keyword id="KW-1048">Host nucleus</keyword>
<keyword id="KW-0964">Secreted</keyword>
<keyword id="KW-0732">Signal</keyword>
<accession>A0A2H5RJD4</accession>
<accession>A0A386HVI6</accession>
<name>CRN1_RHIID</name>